<keyword id="KW-0050">Antiport</keyword>
<keyword id="KW-0997">Cell inner membrane</keyword>
<keyword id="KW-1003">Cell membrane</keyword>
<keyword id="KW-0406">Ion transport</keyword>
<keyword id="KW-0472">Membrane</keyword>
<keyword id="KW-0915">Sodium</keyword>
<keyword id="KW-0739">Sodium transport</keyword>
<keyword id="KW-0812">Transmembrane</keyword>
<keyword id="KW-1133">Transmembrane helix</keyword>
<keyword id="KW-0813">Transport</keyword>
<protein>
    <recommendedName>
        <fullName evidence="1">Na(+)/H(+) antiporter NhaA</fullName>
    </recommendedName>
    <alternativeName>
        <fullName evidence="1">Sodium/proton antiporter NhaA</fullName>
    </alternativeName>
</protein>
<feature type="chain" id="PRO_0000334421" description="Na(+)/H(+) antiporter NhaA">
    <location>
        <begin position="1"/>
        <end position="389"/>
    </location>
</feature>
<feature type="transmembrane region" description="Helical" evidence="1">
    <location>
        <begin position="14"/>
        <end position="34"/>
    </location>
</feature>
<feature type="transmembrane region" description="Helical" evidence="1">
    <location>
        <begin position="59"/>
        <end position="79"/>
    </location>
</feature>
<feature type="transmembrane region" description="Helical" evidence="1">
    <location>
        <begin position="95"/>
        <end position="115"/>
    </location>
</feature>
<feature type="transmembrane region" description="Helical" evidence="1">
    <location>
        <begin position="124"/>
        <end position="144"/>
    </location>
</feature>
<feature type="transmembrane region" description="Helical" evidence="1">
    <location>
        <begin position="154"/>
        <end position="174"/>
    </location>
</feature>
<feature type="transmembrane region" description="Helical" evidence="1">
    <location>
        <begin position="177"/>
        <end position="197"/>
    </location>
</feature>
<feature type="transmembrane region" description="Helical" evidence="1">
    <location>
        <begin position="213"/>
        <end position="233"/>
    </location>
</feature>
<feature type="transmembrane region" description="Helical" evidence="1">
    <location>
        <begin position="257"/>
        <end position="277"/>
    </location>
</feature>
<feature type="transmembrane region" description="Helical" evidence="1">
    <location>
        <begin position="292"/>
        <end position="312"/>
    </location>
</feature>
<feature type="transmembrane region" description="Helical" evidence="1">
    <location>
        <begin position="328"/>
        <end position="348"/>
    </location>
</feature>
<feature type="transmembrane region" description="Helical" evidence="1">
    <location>
        <begin position="363"/>
        <end position="383"/>
    </location>
</feature>
<organism>
    <name type="scientific">Shewanella baltica (strain OS185)</name>
    <dbReference type="NCBI Taxonomy" id="402882"/>
    <lineage>
        <taxon>Bacteria</taxon>
        <taxon>Pseudomonadati</taxon>
        <taxon>Pseudomonadota</taxon>
        <taxon>Gammaproteobacteria</taxon>
        <taxon>Alteromonadales</taxon>
        <taxon>Shewanellaceae</taxon>
        <taxon>Shewanella</taxon>
    </lineage>
</organism>
<sequence>MEKAIRNFLSQESAGGILLLVAVALAMLMANSPLSGLYQGFLGTDVQVKIGELDIHKPLILWINDGLMAVFFLLIGLEVKRELLEGALSSVAQASLPTFAAIGGMLVPAGVYLLFNYGDPVTQAGWAIPAATDIAFALGIMALLGSRVPVSLKVFLLALAIIDDLGVIVIIALFYSTDLSTISLVIASLAIAGLVGLNRKGVTSLLPYGILGLILWVAVLKSGVHATLAGVIIAFCIPLRAKDGSSPSEGLEHSLHPWSTFFILPVFAFANAGVYVGNMNLETLISPVPVGIALGLMLGKPIGVMVFSYIAVKLKLAQLPDGVGWKQIAPVAAMCGIGFTMSMFIASLAFEHADPMYGDLARLGTLIGSIMAALVGYFWLSKVLPNKGV</sequence>
<accession>A6WKP5</accession>
<proteinExistence type="inferred from homology"/>
<comment type="function">
    <text evidence="1">Na(+)/H(+) antiporter that extrudes sodium in exchange for external protons.</text>
</comment>
<comment type="catalytic activity">
    <reaction evidence="1">
        <text>Na(+)(in) + 2 H(+)(out) = Na(+)(out) + 2 H(+)(in)</text>
        <dbReference type="Rhea" id="RHEA:29251"/>
        <dbReference type="ChEBI" id="CHEBI:15378"/>
        <dbReference type="ChEBI" id="CHEBI:29101"/>
    </reaction>
    <physiologicalReaction direction="left-to-right" evidence="1">
        <dbReference type="Rhea" id="RHEA:29252"/>
    </physiologicalReaction>
</comment>
<comment type="subcellular location">
    <subcellularLocation>
        <location evidence="1">Cell inner membrane</location>
        <topology evidence="1">Multi-pass membrane protein</topology>
    </subcellularLocation>
</comment>
<comment type="similarity">
    <text evidence="1">Belongs to the NhaA Na(+)/H(+) (TC 2.A.33) antiporter family.</text>
</comment>
<evidence type="ECO:0000255" key="1">
    <source>
        <dbReference type="HAMAP-Rule" id="MF_01844"/>
    </source>
</evidence>
<dbReference type="EMBL" id="CP000753">
    <property type="protein sequence ID" value="ABS07384.1"/>
    <property type="molecule type" value="Genomic_DNA"/>
</dbReference>
<dbReference type="RefSeq" id="WP_006080767.1">
    <property type="nucleotide sequence ID" value="NC_009665.1"/>
</dbReference>
<dbReference type="SMR" id="A6WKP5"/>
<dbReference type="KEGG" id="sbm:Shew185_1233"/>
<dbReference type="HOGENOM" id="CLU_015803_1_0_6"/>
<dbReference type="GO" id="GO:0005886">
    <property type="term" value="C:plasma membrane"/>
    <property type="evidence" value="ECO:0007669"/>
    <property type="project" value="UniProtKB-SubCell"/>
</dbReference>
<dbReference type="GO" id="GO:0015385">
    <property type="term" value="F:sodium:proton antiporter activity"/>
    <property type="evidence" value="ECO:0007669"/>
    <property type="project" value="TreeGrafter"/>
</dbReference>
<dbReference type="GO" id="GO:0006885">
    <property type="term" value="P:regulation of pH"/>
    <property type="evidence" value="ECO:0007669"/>
    <property type="project" value="InterPro"/>
</dbReference>
<dbReference type="Gene3D" id="1.20.1530.10">
    <property type="entry name" value="Na+/H+ antiporter like domain"/>
    <property type="match status" value="1"/>
</dbReference>
<dbReference type="HAMAP" id="MF_01844">
    <property type="entry name" value="NhaA"/>
    <property type="match status" value="1"/>
</dbReference>
<dbReference type="InterPro" id="IPR023171">
    <property type="entry name" value="Na/H_antiporter_dom_sf"/>
</dbReference>
<dbReference type="InterPro" id="IPR004670">
    <property type="entry name" value="NhaA"/>
</dbReference>
<dbReference type="NCBIfam" id="TIGR00773">
    <property type="entry name" value="NhaA"/>
    <property type="match status" value="1"/>
</dbReference>
<dbReference type="NCBIfam" id="NF007111">
    <property type="entry name" value="PRK09560.1"/>
    <property type="match status" value="1"/>
</dbReference>
<dbReference type="NCBIfam" id="NF007112">
    <property type="entry name" value="PRK09561.1"/>
    <property type="match status" value="1"/>
</dbReference>
<dbReference type="PANTHER" id="PTHR30341:SF0">
    <property type="entry name" value="NA(+)_H(+) ANTIPORTER NHAA"/>
    <property type="match status" value="1"/>
</dbReference>
<dbReference type="PANTHER" id="PTHR30341">
    <property type="entry name" value="SODIUM ION/PROTON ANTIPORTER NHAA-RELATED"/>
    <property type="match status" value="1"/>
</dbReference>
<dbReference type="Pfam" id="PF06965">
    <property type="entry name" value="Na_H_antiport_1"/>
    <property type="match status" value="1"/>
</dbReference>
<gene>
    <name evidence="1" type="primary">nhaA</name>
    <name type="ordered locus">Shew185_1233</name>
</gene>
<reference key="1">
    <citation type="submission" date="2007-07" db="EMBL/GenBank/DDBJ databases">
        <title>Complete sequence of chromosome of Shewanella baltica OS185.</title>
        <authorList>
            <consortium name="US DOE Joint Genome Institute"/>
            <person name="Copeland A."/>
            <person name="Lucas S."/>
            <person name="Lapidus A."/>
            <person name="Barry K."/>
            <person name="Glavina del Rio T."/>
            <person name="Dalin E."/>
            <person name="Tice H."/>
            <person name="Pitluck S."/>
            <person name="Sims D."/>
            <person name="Brettin T."/>
            <person name="Bruce D."/>
            <person name="Detter J.C."/>
            <person name="Han C."/>
            <person name="Schmutz J."/>
            <person name="Larimer F."/>
            <person name="Land M."/>
            <person name="Hauser L."/>
            <person name="Kyrpides N."/>
            <person name="Mikhailova N."/>
            <person name="Brettar I."/>
            <person name="Rodrigues J."/>
            <person name="Konstantinidis K."/>
            <person name="Tiedje J."/>
            <person name="Richardson P."/>
        </authorList>
    </citation>
    <scope>NUCLEOTIDE SEQUENCE [LARGE SCALE GENOMIC DNA]</scope>
    <source>
        <strain>OS185</strain>
    </source>
</reference>
<name>NHAA_SHEB8</name>